<evidence type="ECO:0000255" key="1">
    <source>
        <dbReference type="HAMAP-Rule" id="MF_01595"/>
    </source>
</evidence>
<organism>
    <name type="scientific">Staphylococcus aureus (strain MW2)</name>
    <dbReference type="NCBI Taxonomy" id="196620"/>
    <lineage>
        <taxon>Bacteria</taxon>
        <taxon>Bacillati</taxon>
        <taxon>Bacillota</taxon>
        <taxon>Bacilli</taxon>
        <taxon>Bacillales</taxon>
        <taxon>Staphylococcaceae</taxon>
        <taxon>Staphylococcus</taxon>
    </lineage>
</organism>
<keyword id="KW-0963">Cytoplasm</keyword>
<keyword id="KW-0460">Magnesium</keyword>
<keyword id="KW-0479">Metal-binding</keyword>
<keyword id="KW-0548">Nucleotidyltransferase</keyword>
<keyword id="KW-0694">RNA-binding</keyword>
<keyword id="KW-0808">Transferase</keyword>
<sequence>MSQEKKVFKTEWAGRSLTIETGQLAKQANGAVLVRYGDTVVLSTATASKEPRDGDFFPLTVNYEEKMYAAGKIPGGFKKREGRPGDDATLTARLIDRPIRPLFPKGYKHDVQIMNMVLSADPDCSPQMAAMIGSSMALSVSDIPFQGPIAGVNVGYIDGKYIINPTVEEKEVSRLDLEVAGHKDAVNMVEAGASEITEQEMLEAIFFGHEEIQRLVDFQQQIVDHIQPVKQEFIPVERDEALVERVKSLTEEKGLKETVLTFDKQQRDENLDNLKEEIVNEFIDEEDPENELLIKEVYAILNELVKEEVRRLIADEKIRPDGRKPDEIRPLDSEVGILPRTHGSGLFTRGQTQALSVLTLGALGDYQLIDGLGPEEEKRFMHHYNFPNFSVGETGPVRAPGRREIGHGALGERALKYIIPDTADFPYTIRIVSEVLESNGSSSQASICGSTLALMDAGVPIKAPVAGIAMGLVTREDSYTILTDIQGMEDALGDMDFKVAGTKEGITAIQMDIKIDGLTREIIEEALEQARRGRLEIMNHMLQTIDQPRTELSAYAPKVVTMTIKPDKIRDVIGPGGKKINEIIDETGVKLDIEQDGTIFIGAVDQAMINRAREIIEEITREAEVGQTYQATVKRIEKYGAFVGLFPGKDALLHISQISKNRIEKVEDVLKIGDTIEVKITEIDKQGRVNASHRALEE</sequence>
<feature type="chain" id="PRO_0000260058" description="Polyribonucleotide nucleotidyltransferase">
    <location>
        <begin position="1"/>
        <end position="698"/>
    </location>
</feature>
<feature type="domain" description="KH" evidence="1">
    <location>
        <begin position="557"/>
        <end position="616"/>
    </location>
</feature>
<feature type="domain" description="S1 motif" evidence="1">
    <location>
        <begin position="626"/>
        <end position="694"/>
    </location>
</feature>
<feature type="binding site" evidence="1">
    <location>
        <position position="490"/>
    </location>
    <ligand>
        <name>Mg(2+)</name>
        <dbReference type="ChEBI" id="CHEBI:18420"/>
    </ligand>
</feature>
<feature type="binding site" evidence="1">
    <location>
        <position position="496"/>
    </location>
    <ligand>
        <name>Mg(2+)</name>
        <dbReference type="ChEBI" id="CHEBI:18420"/>
    </ligand>
</feature>
<accession>Q8NWY9</accession>
<protein>
    <recommendedName>
        <fullName evidence="1">Polyribonucleotide nucleotidyltransferase</fullName>
        <ecNumber evidence="1">2.7.7.8</ecNumber>
    </recommendedName>
    <alternativeName>
        <fullName evidence="1">Polynucleotide phosphorylase</fullName>
        <shortName evidence="1">PNPase</shortName>
    </alternativeName>
</protein>
<dbReference type="EC" id="2.7.7.8" evidence="1"/>
<dbReference type="EMBL" id="BA000033">
    <property type="protein sequence ID" value="BAB95022.1"/>
    <property type="molecule type" value="Genomic_DNA"/>
</dbReference>
<dbReference type="RefSeq" id="WP_000076693.1">
    <property type="nucleotide sequence ID" value="NC_003923.1"/>
</dbReference>
<dbReference type="SMR" id="Q8NWY9"/>
<dbReference type="KEGG" id="sam:MW1157"/>
<dbReference type="HOGENOM" id="CLU_004217_2_2_9"/>
<dbReference type="GO" id="GO:0005829">
    <property type="term" value="C:cytosol"/>
    <property type="evidence" value="ECO:0007669"/>
    <property type="project" value="TreeGrafter"/>
</dbReference>
<dbReference type="GO" id="GO:0000175">
    <property type="term" value="F:3'-5'-RNA exonuclease activity"/>
    <property type="evidence" value="ECO:0007669"/>
    <property type="project" value="TreeGrafter"/>
</dbReference>
<dbReference type="GO" id="GO:0000287">
    <property type="term" value="F:magnesium ion binding"/>
    <property type="evidence" value="ECO:0007669"/>
    <property type="project" value="UniProtKB-UniRule"/>
</dbReference>
<dbReference type="GO" id="GO:0004654">
    <property type="term" value="F:polyribonucleotide nucleotidyltransferase activity"/>
    <property type="evidence" value="ECO:0007669"/>
    <property type="project" value="UniProtKB-UniRule"/>
</dbReference>
<dbReference type="GO" id="GO:0003723">
    <property type="term" value="F:RNA binding"/>
    <property type="evidence" value="ECO:0007669"/>
    <property type="project" value="UniProtKB-UniRule"/>
</dbReference>
<dbReference type="GO" id="GO:0006402">
    <property type="term" value="P:mRNA catabolic process"/>
    <property type="evidence" value="ECO:0007669"/>
    <property type="project" value="UniProtKB-UniRule"/>
</dbReference>
<dbReference type="GO" id="GO:0006396">
    <property type="term" value="P:RNA processing"/>
    <property type="evidence" value="ECO:0007669"/>
    <property type="project" value="InterPro"/>
</dbReference>
<dbReference type="CDD" id="cd02393">
    <property type="entry name" value="KH-I_PNPase"/>
    <property type="match status" value="1"/>
</dbReference>
<dbReference type="CDD" id="cd11363">
    <property type="entry name" value="RNase_PH_PNPase_1"/>
    <property type="match status" value="1"/>
</dbReference>
<dbReference type="CDD" id="cd11364">
    <property type="entry name" value="RNase_PH_PNPase_2"/>
    <property type="match status" value="1"/>
</dbReference>
<dbReference type="CDD" id="cd04472">
    <property type="entry name" value="S1_PNPase"/>
    <property type="match status" value="1"/>
</dbReference>
<dbReference type="FunFam" id="2.40.50.140:FF:000023">
    <property type="entry name" value="Polyribonucleotide nucleotidyltransferase"/>
    <property type="match status" value="1"/>
</dbReference>
<dbReference type="FunFam" id="3.30.1370.10:FF:000001">
    <property type="entry name" value="Polyribonucleotide nucleotidyltransferase"/>
    <property type="match status" value="1"/>
</dbReference>
<dbReference type="FunFam" id="3.30.230.70:FF:000001">
    <property type="entry name" value="Polyribonucleotide nucleotidyltransferase"/>
    <property type="match status" value="1"/>
</dbReference>
<dbReference type="FunFam" id="3.30.230.70:FF:000002">
    <property type="entry name" value="Polyribonucleotide nucleotidyltransferase"/>
    <property type="match status" value="1"/>
</dbReference>
<dbReference type="Gene3D" id="3.30.230.70">
    <property type="entry name" value="GHMP Kinase, N-terminal domain"/>
    <property type="match status" value="2"/>
</dbReference>
<dbReference type="Gene3D" id="3.30.1370.10">
    <property type="entry name" value="K Homology domain, type 1"/>
    <property type="match status" value="1"/>
</dbReference>
<dbReference type="Gene3D" id="2.40.50.140">
    <property type="entry name" value="Nucleic acid-binding proteins"/>
    <property type="match status" value="1"/>
</dbReference>
<dbReference type="HAMAP" id="MF_01595">
    <property type="entry name" value="PNPase"/>
    <property type="match status" value="1"/>
</dbReference>
<dbReference type="InterPro" id="IPR001247">
    <property type="entry name" value="ExoRNase_PH_dom1"/>
</dbReference>
<dbReference type="InterPro" id="IPR015847">
    <property type="entry name" value="ExoRNase_PH_dom2"/>
</dbReference>
<dbReference type="InterPro" id="IPR036345">
    <property type="entry name" value="ExoRNase_PH_dom2_sf"/>
</dbReference>
<dbReference type="InterPro" id="IPR004087">
    <property type="entry name" value="KH_dom"/>
</dbReference>
<dbReference type="InterPro" id="IPR004088">
    <property type="entry name" value="KH_dom_type_1"/>
</dbReference>
<dbReference type="InterPro" id="IPR036612">
    <property type="entry name" value="KH_dom_type_1_sf"/>
</dbReference>
<dbReference type="InterPro" id="IPR012340">
    <property type="entry name" value="NA-bd_OB-fold"/>
</dbReference>
<dbReference type="InterPro" id="IPR012162">
    <property type="entry name" value="PNPase"/>
</dbReference>
<dbReference type="InterPro" id="IPR027408">
    <property type="entry name" value="PNPase/RNase_PH_dom_sf"/>
</dbReference>
<dbReference type="InterPro" id="IPR015848">
    <property type="entry name" value="PNPase_PH_RNA-bd_bac/org-type"/>
</dbReference>
<dbReference type="InterPro" id="IPR036456">
    <property type="entry name" value="PNPase_PH_RNA-bd_sf"/>
</dbReference>
<dbReference type="InterPro" id="IPR020568">
    <property type="entry name" value="Ribosomal_Su5_D2-typ_SF"/>
</dbReference>
<dbReference type="InterPro" id="IPR003029">
    <property type="entry name" value="S1_domain"/>
</dbReference>
<dbReference type="NCBIfam" id="TIGR03591">
    <property type="entry name" value="polynuc_phos"/>
    <property type="match status" value="1"/>
</dbReference>
<dbReference type="NCBIfam" id="NF008805">
    <property type="entry name" value="PRK11824.1"/>
    <property type="match status" value="1"/>
</dbReference>
<dbReference type="PANTHER" id="PTHR11252">
    <property type="entry name" value="POLYRIBONUCLEOTIDE NUCLEOTIDYLTRANSFERASE"/>
    <property type="match status" value="1"/>
</dbReference>
<dbReference type="PANTHER" id="PTHR11252:SF0">
    <property type="entry name" value="POLYRIBONUCLEOTIDE NUCLEOTIDYLTRANSFERASE 1, MITOCHONDRIAL"/>
    <property type="match status" value="1"/>
</dbReference>
<dbReference type="Pfam" id="PF00013">
    <property type="entry name" value="KH_1"/>
    <property type="match status" value="1"/>
</dbReference>
<dbReference type="Pfam" id="PF03726">
    <property type="entry name" value="PNPase"/>
    <property type="match status" value="1"/>
</dbReference>
<dbReference type="Pfam" id="PF01138">
    <property type="entry name" value="RNase_PH"/>
    <property type="match status" value="2"/>
</dbReference>
<dbReference type="Pfam" id="PF03725">
    <property type="entry name" value="RNase_PH_C"/>
    <property type="match status" value="2"/>
</dbReference>
<dbReference type="Pfam" id="PF00575">
    <property type="entry name" value="S1"/>
    <property type="match status" value="1"/>
</dbReference>
<dbReference type="PIRSF" id="PIRSF005499">
    <property type="entry name" value="PNPase"/>
    <property type="match status" value="1"/>
</dbReference>
<dbReference type="SMART" id="SM00322">
    <property type="entry name" value="KH"/>
    <property type="match status" value="1"/>
</dbReference>
<dbReference type="SMART" id="SM00316">
    <property type="entry name" value="S1"/>
    <property type="match status" value="1"/>
</dbReference>
<dbReference type="SUPFAM" id="SSF54791">
    <property type="entry name" value="Eukaryotic type KH-domain (KH-domain type I)"/>
    <property type="match status" value="1"/>
</dbReference>
<dbReference type="SUPFAM" id="SSF50249">
    <property type="entry name" value="Nucleic acid-binding proteins"/>
    <property type="match status" value="1"/>
</dbReference>
<dbReference type="SUPFAM" id="SSF46915">
    <property type="entry name" value="Polynucleotide phosphorylase/guanosine pentaphosphate synthase (PNPase/GPSI), domain 3"/>
    <property type="match status" value="1"/>
</dbReference>
<dbReference type="SUPFAM" id="SSF55666">
    <property type="entry name" value="Ribonuclease PH domain 2-like"/>
    <property type="match status" value="2"/>
</dbReference>
<dbReference type="SUPFAM" id="SSF54211">
    <property type="entry name" value="Ribosomal protein S5 domain 2-like"/>
    <property type="match status" value="2"/>
</dbReference>
<dbReference type="PROSITE" id="PS50084">
    <property type="entry name" value="KH_TYPE_1"/>
    <property type="match status" value="1"/>
</dbReference>
<dbReference type="PROSITE" id="PS50126">
    <property type="entry name" value="S1"/>
    <property type="match status" value="1"/>
</dbReference>
<name>PNP_STAAW</name>
<gene>
    <name evidence="1" type="primary">pnp</name>
    <name type="synonym">pnpA</name>
    <name type="ordered locus">MW1157</name>
</gene>
<comment type="function">
    <text evidence="1">Involved in mRNA degradation. Catalyzes the phosphorolysis of single-stranded polyribonucleotides processively in the 3'- to 5'-direction.</text>
</comment>
<comment type="catalytic activity">
    <reaction evidence="1">
        <text>RNA(n+1) + phosphate = RNA(n) + a ribonucleoside 5'-diphosphate</text>
        <dbReference type="Rhea" id="RHEA:22096"/>
        <dbReference type="Rhea" id="RHEA-COMP:14527"/>
        <dbReference type="Rhea" id="RHEA-COMP:17342"/>
        <dbReference type="ChEBI" id="CHEBI:43474"/>
        <dbReference type="ChEBI" id="CHEBI:57930"/>
        <dbReference type="ChEBI" id="CHEBI:140395"/>
        <dbReference type="EC" id="2.7.7.8"/>
    </reaction>
</comment>
<comment type="cofactor">
    <cofactor evidence="1">
        <name>Mg(2+)</name>
        <dbReference type="ChEBI" id="CHEBI:18420"/>
    </cofactor>
</comment>
<comment type="subcellular location">
    <subcellularLocation>
        <location evidence="1">Cytoplasm</location>
    </subcellularLocation>
</comment>
<comment type="similarity">
    <text evidence="1">Belongs to the polyribonucleotide nucleotidyltransferase family.</text>
</comment>
<proteinExistence type="inferred from homology"/>
<reference key="1">
    <citation type="journal article" date="2002" name="Lancet">
        <title>Genome and virulence determinants of high virulence community-acquired MRSA.</title>
        <authorList>
            <person name="Baba T."/>
            <person name="Takeuchi F."/>
            <person name="Kuroda M."/>
            <person name="Yuzawa H."/>
            <person name="Aoki K."/>
            <person name="Oguchi A."/>
            <person name="Nagai Y."/>
            <person name="Iwama N."/>
            <person name="Asano K."/>
            <person name="Naimi T."/>
            <person name="Kuroda H."/>
            <person name="Cui L."/>
            <person name="Yamamoto K."/>
            <person name="Hiramatsu K."/>
        </authorList>
    </citation>
    <scope>NUCLEOTIDE SEQUENCE [LARGE SCALE GENOMIC DNA]</scope>
    <source>
        <strain>MW2</strain>
    </source>
</reference>